<reference key="1">
    <citation type="journal article" date="1990" name="Yeast">
        <title>Characterization of the cytochrome c gene from the starch-fermenting yeast Schwanniomyces occidentalis and its expression in Baker's yeast.</title>
        <authorList>
            <person name="Amegadzie B.Y."/>
            <person name="Zitomer R.S."/>
            <person name="Hollenberg C.P."/>
        </authorList>
    </citation>
    <scope>NUCLEOTIDE SEQUENCE [GENOMIC DNA]</scope>
    <source>
        <strain>ATCC 26076 / DSM 3794 / CBS 2864 / BCRC 22059 / NCYC 954 / NRRL Y-2470</strain>
    </source>
</reference>
<evidence type="ECO:0000250" key="1"/>
<evidence type="ECO:0000305" key="2"/>
<protein>
    <recommendedName>
        <fullName>Cytochrome c</fullName>
    </recommendedName>
</protein>
<dbReference type="EMBL" id="X53770">
    <property type="protein sequence ID" value="CAA37787.1"/>
    <property type="molecule type" value="Genomic_DNA"/>
</dbReference>
<dbReference type="PIR" id="S11172">
    <property type="entry name" value="S11172"/>
</dbReference>
<dbReference type="SMR" id="P19681"/>
<dbReference type="GO" id="GO:0005758">
    <property type="term" value="C:mitochondrial intermembrane space"/>
    <property type="evidence" value="ECO:0007669"/>
    <property type="project" value="UniProtKB-SubCell"/>
</dbReference>
<dbReference type="GO" id="GO:0009055">
    <property type="term" value="F:electron transfer activity"/>
    <property type="evidence" value="ECO:0007669"/>
    <property type="project" value="InterPro"/>
</dbReference>
<dbReference type="GO" id="GO:0020037">
    <property type="term" value="F:heme binding"/>
    <property type="evidence" value="ECO:0007669"/>
    <property type="project" value="InterPro"/>
</dbReference>
<dbReference type="GO" id="GO:0046872">
    <property type="term" value="F:metal ion binding"/>
    <property type="evidence" value="ECO:0007669"/>
    <property type="project" value="UniProtKB-KW"/>
</dbReference>
<dbReference type="FunFam" id="1.10.760.10:FF:000001">
    <property type="entry name" value="Cytochrome c iso-1"/>
    <property type="match status" value="1"/>
</dbReference>
<dbReference type="Gene3D" id="1.10.760.10">
    <property type="entry name" value="Cytochrome c-like domain"/>
    <property type="match status" value="1"/>
</dbReference>
<dbReference type="InterPro" id="IPR009056">
    <property type="entry name" value="Cyt_c-like_dom"/>
</dbReference>
<dbReference type="InterPro" id="IPR036909">
    <property type="entry name" value="Cyt_c-like_dom_sf"/>
</dbReference>
<dbReference type="InterPro" id="IPR002327">
    <property type="entry name" value="Cyt_c_1A/1B"/>
</dbReference>
<dbReference type="PANTHER" id="PTHR11961">
    <property type="entry name" value="CYTOCHROME C"/>
    <property type="match status" value="1"/>
</dbReference>
<dbReference type="Pfam" id="PF00034">
    <property type="entry name" value="Cytochrom_C"/>
    <property type="match status" value="1"/>
</dbReference>
<dbReference type="PRINTS" id="PR00604">
    <property type="entry name" value="CYTCHRMECIAB"/>
</dbReference>
<dbReference type="SUPFAM" id="SSF46626">
    <property type="entry name" value="Cytochrome c"/>
    <property type="match status" value="1"/>
</dbReference>
<dbReference type="PROSITE" id="PS51007">
    <property type="entry name" value="CYTC"/>
    <property type="match status" value="1"/>
</dbReference>
<gene>
    <name type="primary">CYC1</name>
</gene>
<sequence>MPAPYEKGSEKKDANLFKTRCLQCHTVEKGGPHKVGPNLHGIFGRKSGQAAGYSYTDANKKKGVEWTEQTMSDYLENPKKYIPGTKMAFGGLKKPKDRNDLITYLANATK</sequence>
<name>CYC_SCHOC</name>
<accession>P19681</accession>
<feature type="initiator methionine" description="Removed">
    <location>
        <position position="1"/>
    </location>
</feature>
<feature type="chain" id="PRO_0000108322" description="Cytochrome c">
    <location>
        <begin position="2"/>
        <end position="110"/>
    </location>
</feature>
<feature type="binding site" description="covalent">
    <location>
        <position position="21"/>
    </location>
    <ligand>
        <name>heme c</name>
        <dbReference type="ChEBI" id="CHEBI:61717"/>
    </ligand>
</feature>
<feature type="binding site" description="covalent">
    <location>
        <position position="24"/>
    </location>
    <ligand>
        <name>heme c</name>
        <dbReference type="ChEBI" id="CHEBI:61717"/>
    </ligand>
</feature>
<feature type="binding site" description="axial binding residue">
    <location>
        <position position="25"/>
    </location>
    <ligand>
        <name>heme c</name>
        <dbReference type="ChEBI" id="CHEBI:61717"/>
    </ligand>
    <ligandPart>
        <name>Fe</name>
        <dbReference type="ChEBI" id="CHEBI:18248"/>
    </ligandPart>
</feature>
<feature type="binding site" description="axial binding residue">
    <location>
        <position position="87"/>
    </location>
    <ligand>
        <name>heme c</name>
        <dbReference type="ChEBI" id="CHEBI:61717"/>
    </ligand>
    <ligandPart>
        <name>Fe</name>
        <dbReference type="ChEBI" id="CHEBI:18248"/>
    </ligandPart>
</feature>
<feature type="modified residue" description="N6,N6,N6-trimethyllysine" evidence="1">
    <location>
        <position position="79"/>
    </location>
</feature>
<proteinExistence type="inferred from homology"/>
<organism>
    <name type="scientific">Schwanniomyces occidentalis</name>
    <name type="common">Yeast</name>
    <name type="synonym">Debaryomyces occidentalis</name>
    <dbReference type="NCBI Taxonomy" id="27300"/>
    <lineage>
        <taxon>Eukaryota</taxon>
        <taxon>Fungi</taxon>
        <taxon>Dikarya</taxon>
        <taxon>Ascomycota</taxon>
        <taxon>Saccharomycotina</taxon>
        <taxon>Pichiomycetes</taxon>
        <taxon>Debaryomycetaceae</taxon>
        <taxon>Schwanniomyces</taxon>
    </lineage>
</organism>
<keyword id="KW-0249">Electron transport</keyword>
<keyword id="KW-0349">Heme</keyword>
<keyword id="KW-0408">Iron</keyword>
<keyword id="KW-0479">Metal-binding</keyword>
<keyword id="KW-0488">Methylation</keyword>
<keyword id="KW-0496">Mitochondrion</keyword>
<keyword id="KW-0679">Respiratory chain</keyword>
<keyword id="KW-0813">Transport</keyword>
<comment type="function">
    <text>Electron carrier protein. The oxidized form of the cytochrome c heme group can accept an electron from the heme group of the cytochrome c1 subunit of cytochrome reductase. Cytochrome c then transfers this electron to the cytochrome oxidase complex, the final protein carrier in the mitochondrial electron-transport chain.</text>
</comment>
<comment type="subcellular location">
    <subcellularLocation>
        <location>Mitochondrion intermembrane space</location>
    </subcellularLocation>
    <text>Loosely associated with the inner membrane.</text>
</comment>
<comment type="PTM">
    <text>Binds 1 heme c group covalently per subunit.</text>
</comment>
<comment type="similarity">
    <text evidence="2">Belongs to the cytochrome c family.</text>
</comment>
<comment type="online information" name="Protein Spotlight">
    <link uri="https://www.proteinspotlight.org/back_issues/076"/>
    <text>Life shuttle - Issue 76 of November 2006</text>
</comment>